<accession>A4XPL8</accession>
<reference key="1">
    <citation type="submission" date="2007-04" db="EMBL/GenBank/DDBJ databases">
        <title>Complete sequence of Pseudomonas mendocina ymp.</title>
        <authorList>
            <consortium name="US DOE Joint Genome Institute"/>
            <person name="Copeland A."/>
            <person name="Lucas S."/>
            <person name="Lapidus A."/>
            <person name="Barry K."/>
            <person name="Glavina del Rio T."/>
            <person name="Dalin E."/>
            <person name="Tice H."/>
            <person name="Pitluck S."/>
            <person name="Kiss H."/>
            <person name="Brettin T."/>
            <person name="Detter J.C."/>
            <person name="Bruce D."/>
            <person name="Han C."/>
            <person name="Schmutz J."/>
            <person name="Larimer F."/>
            <person name="Land M."/>
            <person name="Hauser L."/>
            <person name="Kyrpides N."/>
            <person name="Mikhailova N."/>
            <person name="Hersman L."/>
            <person name="Dubois J."/>
            <person name="Maurice P."/>
            <person name="Richardson P."/>
        </authorList>
    </citation>
    <scope>NUCLEOTIDE SEQUENCE [LARGE SCALE GENOMIC DNA]</scope>
    <source>
        <strain>ymp</strain>
    </source>
</reference>
<keyword id="KW-0963">Cytoplasm</keyword>
<keyword id="KW-0378">Hydrolase</keyword>
<keyword id="KW-0694">RNA-binding</keyword>
<keyword id="KW-0820">tRNA-binding</keyword>
<gene>
    <name evidence="1" type="primary">dtd</name>
    <name type="ordered locus">Pmen_0514</name>
</gene>
<organism>
    <name type="scientific">Ectopseudomonas mendocina (strain ymp)</name>
    <name type="common">Pseudomonas mendocina</name>
    <dbReference type="NCBI Taxonomy" id="399739"/>
    <lineage>
        <taxon>Bacteria</taxon>
        <taxon>Pseudomonadati</taxon>
        <taxon>Pseudomonadota</taxon>
        <taxon>Gammaproteobacteria</taxon>
        <taxon>Pseudomonadales</taxon>
        <taxon>Pseudomonadaceae</taxon>
        <taxon>Ectopseudomonas</taxon>
    </lineage>
</organism>
<protein>
    <recommendedName>
        <fullName evidence="1">D-aminoacyl-tRNA deacylase</fullName>
        <shortName evidence="1">DTD</shortName>
        <ecNumber evidence="1">3.1.1.96</ecNumber>
    </recommendedName>
    <alternativeName>
        <fullName evidence="1">Gly-tRNA(Ala) deacylase</fullName>
    </alternativeName>
</protein>
<feature type="chain" id="PRO_1000050872" description="D-aminoacyl-tRNA deacylase">
    <location>
        <begin position="1"/>
        <end position="145"/>
    </location>
</feature>
<feature type="short sequence motif" description="Gly-cisPro motif, important for rejection of L-amino acids" evidence="1">
    <location>
        <begin position="137"/>
        <end position="138"/>
    </location>
</feature>
<evidence type="ECO:0000255" key="1">
    <source>
        <dbReference type="HAMAP-Rule" id="MF_00518"/>
    </source>
</evidence>
<comment type="function">
    <text evidence="1">An aminoacyl-tRNA editing enzyme that deacylates mischarged D-aminoacyl-tRNAs. Also deacylates mischarged glycyl-tRNA(Ala), protecting cells against glycine mischarging by AlaRS. Acts via tRNA-based rather than protein-based catalysis; rejects L-amino acids rather than detecting D-amino acids in the active site. By recycling D-aminoacyl-tRNA to D-amino acids and free tRNA molecules, this enzyme counteracts the toxicity associated with the formation of D-aminoacyl-tRNA entities in vivo and helps enforce protein L-homochirality.</text>
</comment>
<comment type="catalytic activity">
    <reaction evidence="1">
        <text>glycyl-tRNA(Ala) + H2O = tRNA(Ala) + glycine + H(+)</text>
        <dbReference type="Rhea" id="RHEA:53744"/>
        <dbReference type="Rhea" id="RHEA-COMP:9657"/>
        <dbReference type="Rhea" id="RHEA-COMP:13640"/>
        <dbReference type="ChEBI" id="CHEBI:15377"/>
        <dbReference type="ChEBI" id="CHEBI:15378"/>
        <dbReference type="ChEBI" id="CHEBI:57305"/>
        <dbReference type="ChEBI" id="CHEBI:78442"/>
        <dbReference type="ChEBI" id="CHEBI:78522"/>
        <dbReference type="EC" id="3.1.1.96"/>
    </reaction>
</comment>
<comment type="catalytic activity">
    <reaction evidence="1">
        <text>a D-aminoacyl-tRNA + H2O = a tRNA + a D-alpha-amino acid + H(+)</text>
        <dbReference type="Rhea" id="RHEA:13953"/>
        <dbReference type="Rhea" id="RHEA-COMP:10123"/>
        <dbReference type="Rhea" id="RHEA-COMP:10124"/>
        <dbReference type="ChEBI" id="CHEBI:15377"/>
        <dbReference type="ChEBI" id="CHEBI:15378"/>
        <dbReference type="ChEBI" id="CHEBI:59871"/>
        <dbReference type="ChEBI" id="CHEBI:78442"/>
        <dbReference type="ChEBI" id="CHEBI:79333"/>
        <dbReference type="EC" id="3.1.1.96"/>
    </reaction>
</comment>
<comment type="subunit">
    <text evidence="1">Homodimer.</text>
</comment>
<comment type="subcellular location">
    <subcellularLocation>
        <location evidence="1">Cytoplasm</location>
    </subcellularLocation>
</comment>
<comment type="domain">
    <text evidence="1">A Gly-cisPro motif from one monomer fits into the active site of the other monomer to allow specific chiral rejection of L-amino acids.</text>
</comment>
<comment type="similarity">
    <text evidence="1">Belongs to the DTD family.</text>
</comment>
<proteinExistence type="inferred from homology"/>
<dbReference type="EC" id="3.1.1.96" evidence="1"/>
<dbReference type="EMBL" id="CP000680">
    <property type="protein sequence ID" value="ABP83284.1"/>
    <property type="molecule type" value="Genomic_DNA"/>
</dbReference>
<dbReference type="SMR" id="A4XPL8"/>
<dbReference type="STRING" id="399739.Pmen_0514"/>
<dbReference type="KEGG" id="pmy:Pmen_0514"/>
<dbReference type="PATRIC" id="fig|399739.8.peg.522"/>
<dbReference type="eggNOG" id="COG1490">
    <property type="taxonomic scope" value="Bacteria"/>
</dbReference>
<dbReference type="HOGENOM" id="CLU_076901_1_1_6"/>
<dbReference type="OrthoDB" id="9801395at2"/>
<dbReference type="GO" id="GO:0005737">
    <property type="term" value="C:cytoplasm"/>
    <property type="evidence" value="ECO:0007669"/>
    <property type="project" value="UniProtKB-SubCell"/>
</dbReference>
<dbReference type="GO" id="GO:0051500">
    <property type="term" value="F:D-tyrosyl-tRNA(Tyr) deacylase activity"/>
    <property type="evidence" value="ECO:0007669"/>
    <property type="project" value="TreeGrafter"/>
</dbReference>
<dbReference type="GO" id="GO:0106026">
    <property type="term" value="F:Gly-tRNA(Ala) deacylase activity"/>
    <property type="evidence" value="ECO:0007669"/>
    <property type="project" value="UniProtKB-UniRule"/>
</dbReference>
<dbReference type="GO" id="GO:0043908">
    <property type="term" value="F:Ser(Gly)-tRNA(Ala) hydrolase activity"/>
    <property type="evidence" value="ECO:0007669"/>
    <property type="project" value="UniProtKB-UniRule"/>
</dbReference>
<dbReference type="GO" id="GO:0000049">
    <property type="term" value="F:tRNA binding"/>
    <property type="evidence" value="ECO:0007669"/>
    <property type="project" value="UniProtKB-UniRule"/>
</dbReference>
<dbReference type="GO" id="GO:0019478">
    <property type="term" value="P:D-amino acid catabolic process"/>
    <property type="evidence" value="ECO:0007669"/>
    <property type="project" value="UniProtKB-UniRule"/>
</dbReference>
<dbReference type="FunFam" id="3.50.80.10:FF:000001">
    <property type="entry name" value="D-aminoacyl-tRNA deacylase"/>
    <property type="match status" value="1"/>
</dbReference>
<dbReference type="Gene3D" id="3.50.80.10">
    <property type="entry name" value="D-tyrosyl-tRNA(Tyr) deacylase"/>
    <property type="match status" value="1"/>
</dbReference>
<dbReference type="HAMAP" id="MF_00518">
    <property type="entry name" value="Deacylase_Dtd"/>
    <property type="match status" value="1"/>
</dbReference>
<dbReference type="InterPro" id="IPR003732">
    <property type="entry name" value="Daa-tRNA_deacyls_DTD"/>
</dbReference>
<dbReference type="InterPro" id="IPR023509">
    <property type="entry name" value="DTD-like_sf"/>
</dbReference>
<dbReference type="NCBIfam" id="TIGR00256">
    <property type="entry name" value="D-aminoacyl-tRNA deacylase"/>
    <property type="match status" value="1"/>
</dbReference>
<dbReference type="PANTHER" id="PTHR10472:SF5">
    <property type="entry name" value="D-AMINOACYL-TRNA DEACYLASE 1"/>
    <property type="match status" value="1"/>
</dbReference>
<dbReference type="PANTHER" id="PTHR10472">
    <property type="entry name" value="D-TYROSYL-TRNA TYR DEACYLASE"/>
    <property type="match status" value="1"/>
</dbReference>
<dbReference type="Pfam" id="PF02580">
    <property type="entry name" value="Tyr_Deacylase"/>
    <property type="match status" value="1"/>
</dbReference>
<dbReference type="SUPFAM" id="SSF69500">
    <property type="entry name" value="DTD-like"/>
    <property type="match status" value="1"/>
</dbReference>
<name>DTD_ECTM1</name>
<sequence>MKLLIQRVSAARVEVEGEVVGGIDQGLLALVGIEPQDDQASLTRALHKLLNYRVFSDEAGKMNRSLTDVQGGLLLVSQFTLAADTKSGMRPSFSSAAPPAQGEALFDALVEAARARHPQVATGRFGANMQVHLVNDGPVTFLLEV</sequence>